<feature type="chain" id="PRO_1000212603" description="Probable transcriptional regulatory protein Desal_2886">
    <location>
        <begin position="1"/>
        <end position="248"/>
    </location>
</feature>
<feature type="region of interest" description="Disordered" evidence="2">
    <location>
        <begin position="1"/>
        <end position="21"/>
    </location>
</feature>
<name>Y2886_MARSD</name>
<evidence type="ECO:0000255" key="1">
    <source>
        <dbReference type="HAMAP-Rule" id="MF_00693"/>
    </source>
</evidence>
<evidence type="ECO:0000256" key="2">
    <source>
        <dbReference type="SAM" id="MobiDB-lite"/>
    </source>
</evidence>
<accession>C6C067</accession>
<dbReference type="EMBL" id="CP001649">
    <property type="protein sequence ID" value="ACS80938.1"/>
    <property type="molecule type" value="Genomic_DNA"/>
</dbReference>
<dbReference type="RefSeq" id="WP_015852754.1">
    <property type="nucleotide sequence ID" value="NC_012881.1"/>
</dbReference>
<dbReference type="SMR" id="C6C067"/>
<dbReference type="STRING" id="526222.Desal_2886"/>
<dbReference type="KEGG" id="dsa:Desal_2886"/>
<dbReference type="eggNOG" id="COG0217">
    <property type="taxonomic scope" value="Bacteria"/>
</dbReference>
<dbReference type="HOGENOM" id="CLU_062974_2_2_7"/>
<dbReference type="OrthoDB" id="9781053at2"/>
<dbReference type="Proteomes" id="UP000002601">
    <property type="component" value="Chromosome"/>
</dbReference>
<dbReference type="GO" id="GO:0005829">
    <property type="term" value="C:cytosol"/>
    <property type="evidence" value="ECO:0007669"/>
    <property type="project" value="TreeGrafter"/>
</dbReference>
<dbReference type="GO" id="GO:0003677">
    <property type="term" value="F:DNA binding"/>
    <property type="evidence" value="ECO:0007669"/>
    <property type="project" value="UniProtKB-UniRule"/>
</dbReference>
<dbReference type="GO" id="GO:0006355">
    <property type="term" value="P:regulation of DNA-templated transcription"/>
    <property type="evidence" value="ECO:0007669"/>
    <property type="project" value="UniProtKB-UniRule"/>
</dbReference>
<dbReference type="FunFam" id="1.10.10.200:FF:000002">
    <property type="entry name" value="Probable transcriptional regulatory protein CLM62_37755"/>
    <property type="match status" value="1"/>
</dbReference>
<dbReference type="FunFam" id="3.30.70.980:FF:000002">
    <property type="entry name" value="Probable transcriptional regulatory protein YebC"/>
    <property type="match status" value="1"/>
</dbReference>
<dbReference type="Gene3D" id="1.10.10.200">
    <property type="match status" value="1"/>
</dbReference>
<dbReference type="Gene3D" id="3.30.70.980">
    <property type="match status" value="2"/>
</dbReference>
<dbReference type="HAMAP" id="MF_00693">
    <property type="entry name" value="Transcrip_reg_TACO1"/>
    <property type="match status" value="1"/>
</dbReference>
<dbReference type="InterPro" id="IPR017856">
    <property type="entry name" value="Integrase-like_N"/>
</dbReference>
<dbReference type="InterPro" id="IPR048300">
    <property type="entry name" value="TACO1_YebC-like_2nd/3rd_dom"/>
</dbReference>
<dbReference type="InterPro" id="IPR049083">
    <property type="entry name" value="TACO1_YebC_N"/>
</dbReference>
<dbReference type="InterPro" id="IPR002876">
    <property type="entry name" value="Transcrip_reg_TACO1-like"/>
</dbReference>
<dbReference type="InterPro" id="IPR026564">
    <property type="entry name" value="Transcrip_reg_TACO1-like_dom3"/>
</dbReference>
<dbReference type="InterPro" id="IPR029072">
    <property type="entry name" value="YebC-like"/>
</dbReference>
<dbReference type="NCBIfam" id="NF001030">
    <property type="entry name" value="PRK00110.1"/>
    <property type="match status" value="1"/>
</dbReference>
<dbReference type="NCBIfam" id="NF009044">
    <property type="entry name" value="PRK12378.1"/>
    <property type="match status" value="1"/>
</dbReference>
<dbReference type="NCBIfam" id="TIGR01033">
    <property type="entry name" value="YebC/PmpR family DNA-binding transcriptional regulator"/>
    <property type="match status" value="1"/>
</dbReference>
<dbReference type="PANTHER" id="PTHR12532:SF6">
    <property type="entry name" value="TRANSCRIPTIONAL REGULATORY PROTEIN YEBC-RELATED"/>
    <property type="match status" value="1"/>
</dbReference>
<dbReference type="PANTHER" id="PTHR12532">
    <property type="entry name" value="TRANSLATIONAL ACTIVATOR OF CYTOCHROME C OXIDASE 1"/>
    <property type="match status" value="1"/>
</dbReference>
<dbReference type="Pfam" id="PF20772">
    <property type="entry name" value="TACO1_YebC_N"/>
    <property type="match status" value="1"/>
</dbReference>
<dbReference type="Pfam" id="PF01709">
    <property type="entry name" value="Transcrip_reg"/>
    <property type="match status" value="1"/>
</dbReference>
<dbReference type="SUPFAM" id="SSF75625">
    <property type="entry name" value="YebC-like"/>
    <property type="match status" value="1"/>
</dbReference>
<gene>
    <name type="ordered locus">Desal_2886</name>
</gene>
<proteinExistence type="inferred from homology"/>
<keyword id="KW-0963">Cytoplasm</keyword>
<keyword id="KW-0238">DNA-binding</keyword>
<keyword id="KW-1185">Reference proteome</keyword>
<keyword id="KW-0804">Transcription</keyword>
<keyword id="KW-0805">Transcription regulation</keyword>
<reference key="1">
    <citation type="submission" date="2009-06" db="EMBL/GenBank/DDBJ databases">
        <title>Complete sequence of Desulfovibrio salexigens DSM 2638.</title>
        <authorList>
            <consortium name="US DOE Joint Genome Institute"/>
            <person name="Lucas S."/>
            <person name="Copeland A."/>
            <person name="Lapidus A."/>
            <person name="Glavina del Rio T."/>
            <person name="Tice H."/>
            <person name="Bruce D."/>
            <person name="Goodwin L."/>
            <person name="Pitluck S."/>
            <person name="Munk A.C."/>
            <person name="Brettin T."/>
            <person name="Detter J.C."/>
            <person name="Han C."/>
            <person name="Tapia R."/>
            <person name="Larimer F."/>
            <person name="Land M."/>
            <person name="Hauser L."/>
            <person name="Kyrpides N."/>
            <person name="Anderson I."/>
            <person name="Wall J.D."/>
            <person name="Arkin A.P."/>
            <person name="Dehal P."/>
            <person name="Chivian D."/>
            <person name="Giles B."/>
            <person name="Hazen T.C."/>
        </authorList>
    </citation>
    <scope>NUCLEOTIDE SEQUENCE [LARGE SCALE GENOMIC DNA]</scope>
    <source>
        <strain>ATCC 14822 / DSM 2638 / NCIMB 8403 / VKM B-1763</strain>
    </source>
</reference>
<protein>
    <recommendedName>
        <fullName evidence="1">Probable transcriptional regulatory protein Desal_2886</fullName>
    </recommendedName>
</protein>
<sequence length="248" mass="26759">MAGHSKWANIQHRKGRQDAKRGKIFTKMAKDIILAAKGGGDPAMNPSLRLAISKAKAVNMPNDKIDTAIKKGTGELAGGDISEVMYEGYGPGGVAILVEAATDNKNRTVAEVRHALGKGGGSMGEAGCVAWMFDKKGVMVFDAEKYTEDQLLEIGLEAGAEDVIAEDESLEVHCMPEDFSEVQKAFEAAECEAKSSDLAFVPKNLVEVDVPTAKKLMNLMEKLEDNDDVQNVHVNADFPDELMAEMED</sequence>
<comment type="subcellular location">
    <subcellularLocation>
        <location evidence="1">Cytoplasm</location>
    </subcellularLocation>
</comment>
<comment type="similarity">
    <text evidence="1">Belongs to the TACO1 family.</text>
</comment>
<organism>
    <name type="scientific">Maridesulfovibrio salexigens (strain ATCC 14822 / DSM 2638 / NCIMB 8403 / VKM B-1763)</name>
    <name type="common">Desulfovibrio salexigens</name>
    <dbReference type="NCBI Taxonomy" id="526222"/>
    <lineage>
        <taxon>Bacteria</taxon>
        <taxon>Pseudomonadati</taxon>
        <taxon>Thermodesulfobacteriota</taxon>
        <taxon>Desulfovibrionia</taxon>
        <taxon>Desulfovibrionales</taxon>
        <taxon>Desulfovibrionaceae</taxon>
        <taxon>Maridesulfovibrio</taxon>
    </lineage>
</organism>